<organism>
    <name type="scientific">Saccharomyces cerevisiae (strain ATCC 204508 / S288c)</name>
    <name type="common">Baker's yeast</name>
    <dbReference type="NCBI Taxonomy" id="559292"/>
    <lineage>
        <taxon>Eukaryota</taxon>
        <taxon>Fungi</taxon>
        <taxon>Dikarya</taxon>
        <taxon>Ascomycota</taxon>
        <taxon>Saccharomycotina</taxon>
        <taxon>Saccharomycetes</taxon>
        <taxon>Saccharomycetales</taxon>
        <taxon>Saccharomycetaceae</taxon>
        <taxon>Saccharomyces</taxon>
    </lineage>
</organism>
<comment type="function">
    <text>Involved in growth regulation.</text>
</comment>
<comment type="subunit">
    <text evidence="2 4 5">Homodimer (PubMed:29087344). Interacts with NTH1 (via N-terminus when phosphorylated by PKA); the interaction is direct and activates NTH1 (PubMed:22320399, PubMed:29087344). Interacts with FIN1 (PubMed:12551942).</text>
</comment>
<comment type="interaction">
    <interactant intactId="EBI-3661">
        <id>P29311</id>
    </interactant>
    <interactant intactId="EBI-3672">
        <id>P34730</id>
        <label>BMH2</label>
    </interactant>
    <organismsDiffer>false</organismsDiffer>
    <experiments>8</experiments>
</comment>
<comment type="interaction">
    <interactant intactId="EBI-3661">
        <id>P29311</id>
    </interactant>
    <interactant intactId="EBI-9792">
        <id>P36004</id>
        <label>KKQ8</label>
    </interactant>
    <organismsDiffer>false</organismsDiffer>
    <experiments>3</experiments>
</comment>
<comment type="interaction">
    <interactant intactId="EBI-3661">
        <id>P29311</id>
    </interactant>
    <interactant intactId="EBI-19509">
        <id>P32356</id>
        <label>NTH1</label>
    </interactant>
    <organismsDiffer>false</organismsDiffer>
    <experiments>8</experiments>
</comment>
<comment type="interaction">
    <interactant intactId="EBI-3661">
        <id>P29311</id>
    </interactant>
    <interactant intactId="EBI-720593">
        <id>Q96B36</id>
        <label>AKT1S1</label>
    </interactant>
    <organismsDiffer>true</organismsDiffer>
    <experiments>3</experiments>
</comment>
<comment type="miscellaneous">
    <text evidence="3">Present with 158000 molecules/cell in log phase SD medium.</text>
</comment>
<comment type="similarity">
    <text evidence="7">Belongs to the 14-3-3 family.</text>
</comment>
<keyword id="KW-0002">3D-structure</keyword>
<keyword id="KW-0007">Acetylation</keyword>
<keyword id="KW-1017">Isopeptide bond</keyword>
<keyword id="KW-0597">Phosphoprotein</keyword>
<keyword id="KW-1185">Reference proteome</keyword>
<keyword id="KW-0832">Ubl conjugation</keyword>
<gene>
    <name type="primary">BMH1</name>
    <name type="ordered locus">YER177W</name>
</gene>
<protein>
    <recommendedName>
        <fullName>Protein BMH1</fullName>
    </recommendedName>
</protein>
<proteinExistence type="evidence at protein level"/>
<name>BMH1_YEAST</name>
<feature type="initiator methionine" description="Removed" evidence="6">
    <location>
        <position position="1"/>
    </location>
</feature>
<feature type="chain" id="PRO_0000058715" description="Protein BMH1">
    <location>
        <begin position="2"/>
        <end position="267"/>
    </location>
</feature>
<feature type="region of interest" description="Disordered" evidence="1">
    <location>
        <begin position="236"/>
        <end position="267"/>
    </location>
</feature>
<feature type="compositionally biased region" description="Low complexity" evidence="1">
    <location>
        <begin position="243"/>
        <end position="267"/>
    </location>
</feature>
<feature type="site" description="NTH1 binding" evidence="5 8">
    <location>
        <position position="136"/>
    </location>
</feature>
<feature type="site" description="NTH1 binding" evidence="5 8">
    <location>
        <position position="185"/>
    </location>
</feature>
<feature type="modified residue" description="N-acetylserine" evidence="6">
    <location>
        <position position="2"/>
    </location>
</feature>
<feature type="modified residue" description="Phosphoserine" evidence="9">
    <location>
        <position position="89"/>
    </location>
</feature>
<feature type="cross-link" description="Glycyl lysine isopeptide (Lys-Gly) (interchain with G-Cter in ubiquitin)" evidence="10">
    <location>
        <position position="76"/>
    </location>
</feature>
<feature type="sequence conflict" description="In Ref. 1; CAA50656 and 2; CAA46959." evidence="7" ref="1 2">
    <original>A</original>
    <variation>R</variation>
    <location>
        <position position="197"/>
    </location>
</feature>
<feature type="sequence conflict" description="In Ref. 1; CAA50656." evidence="7" ref="1">
    <original>GEAPK</original>
    <variation>VKHQSKYSDKSKEKLLKKRKKKERGCNNL</variation>
    <location>
        <begin position="263"/>
        <end position="267"/>
    </location>
</feature>
<feature type="helix" evidence="11">
    <location>
        <begin position="6"/>
        <end position="18"/>
    </location>
</feature>
<feature type="helix" evidence="11">
    <location>
        <begin position="21"/>
        <end position="33"/>
    </location>
</feature>
<feature type="strand" evidence="11">
    <location>
        <begin position="34"/>
        <end position="36"/>
    </location>
</feature>
<feature type="helix" evidence="11">
    <location>
        <begin position="40"/>
        <end position="72"/>
    </location>
</feature>
<feature type="helix" evidence="11">
    <location>
        <begin position="78"/>
        <end position="108"/>
    </location>
</feature>
<feature type="helix" evidence="11">
    <location>
        <begin position="110"/>
        <end position="113"/>
    </location>
</feature>
<feature type="helix" evidence="11">
    <location>
        <begin position="117"/>
        <end position="137"/>
    </location>
</feature>
<feature type="helix" evidence="11">
    <location>
        <begin position="140"/>
        <end position="164"/>
    </location>
</feature>
<feature type="helix" evidence="11">
    <location>
        <begin position="170"/>
        <end position="185"/>
    </location>
</feature>
<feature type="helix" evidence="11">
    <location>
        <begin position="190"/>
        <end position="203"/>
    </location>
</feature>
<feature type="turn" evidence="11">
    <location>
        <begin position="204"/>
        <end position="207"/>
    </location>
</feature>
<feature type="helix" evidence="11">
    <location>
        <begin position="208"/>
        <end position="210"/>
    </location>
</feature>
<feature type="helix" evidence="11">
    <location>
        <begin position="213"/>
        <end position="233"/>
    </location>
</feature>
<evidence type="ECO:0000256" key="1">
    <source>
        <dbReference type="SAM" id="MobiDB-lite"/>
    </source>
</evidence>
<evidence type="ECO:0000269" key="2">
    <source>
    </source>
</evidence>
<evidence type="ECO:0000269" key="3">
    <source>
    </source>
</evidence>
<evidence type="ECO:0000269" key="4">
    <source>
    </source>
</evidence>
<evidence type="ECO:0000269" key="5">
    <source>
    </source>
</evidence>
<evidence type="ECO:0000269" key="6">
    <source>
    </source>
</evidence>
<evidence type="ECO:0000305" key="7"/>
<evidence type="ECO:0007744" key="8">
    <source>
        <dbReference type="PDB" id="5N6N"/>
    </source>
</evidence>
<evidence type="ECO:0007744" key="9">
    <source>
    </source>
</evidence>
<evidence type="ECO:0007744" key="10">
    <source>
    </source>
</evidence>
<evidence type="ECO:0007829" key="11">
    <source>
        <dbReference type="PDB" id="5N6N"/>
    </source>
</evidence>
<sequence length="267" mass="30091">MSTSREDSVYLAKLAEQAERYEEMVENMKTVASSGQELSVEERNLLSVAYKNVIGARRASWRIVSSIEQKEESKEKSEHQVELICSYRSKIETELTKISDDILSVLDSHLIPSATTGESKVFYYKMKGDYHRYLAEFSSGDAREKATNASLEAYKTASEIATTELPPTHPIRLGLALNFSVFYYEIQNSPDKACHLAKQAFDDAIAELDTLSEESYKDSTLIMQLLRDNLTLWTSDMSESGQAEDQQQQQQHQQQQPPAAAEGEAPK</sequence>
<dbReference type="EMBL" id="X71664">
    <property type="protein sequence ID" value="CAA50656.1"/>
    <property type="molecule type" value="Genomic_DNA"/>
</dbReference>
<dbReference type="EMBL" id="X66206">
    <property type="protein sequence ID" value="CAA46959.1"/>
    <property type="molecule type" value="Genomic_DNA"/>
</dbReference>
<dbReference type="EMBL" id="U18922">
    <property type="protein sequence ID" value="AAB64704.1"/>
    <property type="molecule type" value="Genomic_DNA"/>
</dbReference>
<dbReference type="EMBL" id="BK006939">
    <property type="protein sequence ID" value="DAA07840.1"/>
    <property type="molecule type" value="Genomic_DNA"/>
</dbReference>
<dbReference type="PIR" id="S30863">
    <property type="entry name" value="S30863"/>
</dbReference>
<dbReference type="RefSeq" id="NP_011104.3">
    <property type="nucleotide sequence ID" value="NM_001179067.3"/>
</dbReference>
<dbReference type="PDB" id="5N6N">
    <property type="method" value="X-ray"/>
    <property type="resolution" value="2.29 A"/>
    <property type="chains" value="A/B=1-236"/>
</dbReference>
<dbReference type="PDB" id="6QK8">
    <property type="method" value="X-ray"/>
    <property type="resolution" value="2.92 A"/>
    <property type="chains" value="A/B/C/D=1-236"/>
</dbReference>
<dbReference type="PDBsum" id="5N6N"/>
<dbReference type="PDBsum" id="6QK8"/>
<dbReference type="SMR" id="P29311"/>
<dbReference type="BioGRID" id="36930">
    <property type="interactions" value="1091"/>
</dbReference>
<dbReference type="DIP" id="DIP-4313N"/>
<dbReference type="FunCoup" id="P29311">
    <property type="interactions" value="1795"/>
</dbReference>
<dbReference type="IntAct" id="P29311">
    <property type="interactions" value="213"/>
</dbReference>
<dbReference type="MINT" id="P29311"/>
<dbReference type="STRING" id="4932.YER177W"/>
<dbReference type="iPTMnet" id="P29311"/>
<dbReference type="PaxDb" id="4932-YER177W"/>
<dbReference type="PeptideAtlas" id="P29311"/>
<dbReference type="TopDownProteomics" id="P29311"/>
<dbReference type="EnsemblFungi" id="YER177W_mRNA">
    <property type="protein sequence ID" value="YER177W"/>
    <property type="gene ID" value="YER177W"/>
</dbReference>
<dbReference type="GeneID" id="856924"/>
<dbReference type="KEGG" id="sce:YER177W"/>
<dbReference type="AGR" id="SGD:S000000979"/>
<dbReference type="SGD" id="S000000979">
    <property type="gene designation" value="BMH1"/>
</dbReference>
<dbReference type="VEuPathDB" id="FungiDB:YER177W"/>
<dbReference type="eggNOG" id="KOG0841">
    <property type="taxonomic scope" value="Eukaryota"/>
</dbReference>
<dbReference type="GeneTree" id="ENSGT01110000267238"/>
<dbReference type="HOGENOM" id="CLU_058290_0_0_1"/>
<dbReference type="InParanoid" id="P29311"/>
<dbReference type="OMA" id="MIKNYRQ"/>
<dbReference type="OrthoDB" id="10260625at2759"/>
<dbReference type="BioCyc" id="YEAST:G3O-30336-MONOMER"/>
<dbReference type="BioGRID-ORCS" id="856924">
    <property type="hits" value="0 hits in 10 CRISPR screens"/>
</dbReference>
<dbReference type="CD-CODE" id="E03F929F">
    <property type="entry name" value="Stress granule"/>
</dbReference>
<dbReference type="PRO" id="PR:P29311"/>
<dbReference type="Proteomes" id="UP000002311">
    <property type="component" value="Chromosome V"/>
</dbReference>
<dbReference type="RNAct" id="P29311">
    <property type="molecule type" value="protein"/>
</dbReference>
<dbReference type="GO" id="GO:0005737">
    <property type="term" value="C:cytoplasm"/>
    <property type="evidence" value="ECO:0000314"/>
    <property type="project" value="SGD"/>
</dbReference>
<dbReference type="GO" id="GO:0010494">
    <property type="term" value="C:cytoplasmic stress granule"/>
    <property type="evidence" value="ECO:0007005"/>
    <property type="project" value="SGD"/>
</dbReference>
<dbReference type="GO" id="GO:0005634">
    <property type="term" value="C:nucleus"/>
    <property type="evidence" value="ECO:0000314"/>
    <property type="project" value="SGD"/>
</dbReference>
<dbReference type="GO" id="GO:0005886">
    <property type="term" value="C:plasma membrane"/>
    <property type="evidence" value="ECO:0007005"/>
    <property type="project" value="SGD"/>
</dbReference>
<dbReference type="GO" id="GO:0003688">
    <property type="term" value="F:DNA replication origin binding"/>
    <property type="evidence" value="ECO:0000314"/>
    <property type="project" value="SGD"/>
</dbReference>
<dbReference type="GO" id="GO:0008047">
    <property type="term" value="F:enzyme activator activity"/>
    <property type="evidence" value="ECO:0000314"/>
    <property type="project" value="UniProtKB"/>
</dbReference>
<dbReference type="GO" id="GO:0050815">
    <property type="term" value="F:phosphoserine residue binding"/>
    <property type="evidence" value="ECO:0000315"/>
    <property type="project" value="SGD"/>
</dbReference>
<dbReference type="GO" id="GO:0061629">
    <property type="term" value="F:RNA polymerase II-specific DNA-binding transcription factor binding"/>
    <property type="evidence" value="ECO:0000314"/>
    <property type="project" value="SGD"/>
</dbReference>
<dbReference type="GO" id="GO:0070842">
    <property type="term" value="P:aggresome assembly"/>
    <property type="evidence" value="ECO:0000315"/>
    <property type="project" value="SGD"/>
</dbReference>
<dbReference type="GO" id="GO:0030437">
    <property type="term" value="P:ascospore formation"/>
    <property type="evidence" value="ECO:0000316"/>
    <property type="project" value="SGD"/>
</dbReference>
<dbReference type="GO" id="GO:0006031">
    <property type="term" value="P:chitin biosynthetic process"/>
    <property type="evidence" value="ECO:0000316"/>
    <property type="project" value="SGD"/>
</dbReference>
<dbReference type="GO" id="GO:0000077">
    <property type="term" value="P:DNA damage checkpoint signaling"/>
    <property type="evidence" value="ECO:0000315"/>
    <property type="project" value="SGD"/>
</dbReference>
<dbReference type="GO" id="GO:0031578">
    <property type="term" value="P:mitotic spindle orientation checkpoint signaling"/>
    <property type="evidence" value="ECO:0000316"/>
    <property type="project" value="SGD"/>
</dbReference>
<dbReference type="GO" id="GO:0043066">
    <property type="term" value="P:negative regulation of apoptotic process"/>
    <property type="evidence" value="ECO:0000315"/>
    <property type="project" value="SGD"/>
</dbReference>
<dbReference type="GO" id="GO:0031397">
    <property type="term" value="P:negative regulation of protein ubiquitination"/>
    <property type="evidence" value="ECO:0000353"/>
    <property type="project" value="SGD"/>
</dbReference>
<dbReference type="GO" id="GO:0000122">
    <property type="term" value="P:negative regulation of transcription by RNA polymerase II"/>
    <property type="evidence" value="ECO:0000315"/>
    <property type="project" value="SGD"/>
</dbReference>
<dbReference type="GO" id="GO:0008104">
    <property type="term" value="P:protein localization"/>
    <property type="evidence" value="ECO:0000318"/>
    <property type="project" value="GO_Central"/>
</dbReference>
<dbReference type="GO" id="GO:0007124">
    <property type="term" value="P:pseudohyphal growth"/>
    <property type="evidence" value="ECO:0000316"/>
    <property type="project" value="SGD"/>
</dbReference>
<dbReference type="GO" id="GO:0007265">
    <property type="term" value="P:Ras protein signal transduction"/>
    <property type="evidence" value="ECO:0000316"/>
    <property type="project" value="SGD"/>
</dbReference>
<dbReference type="GO" id="GO:0070873">
    <property type="term" value="P:regulation of glycogen metabolic process"/>
    <property type="evidence" value="ECO:0000316"/>
    <property type="project" value="SGD"/>
</dbReference>
<dbReference type="GO" id="GO:0007165">
    <property type="term" value="P:signal transduction"/>
    <property type="evidence" value="ECO:0000318"/>
    <property type="project" value="GO_Central"/>
</dbReference>
<dbReference type="GO" id="GO:0001402">
    <property type="term" value="P:signal transduction involved in filamentous growth"/>
    <property type="evidence" value="ECO:0000316"/>
    <property type="project" value="SGD"/>
</dbReference>
<dbReference type="FunFam" id="1.20.190.20:FF:000002">
    <property type="entry name" value="14-3-3 protein epsilon"/>
    <property type="match status" value="1"/>
</dbReference>
<dbReference type="Gene3D" id="1.20.190.20">
    <property type="entry name" value="14-3-3 domain"/>
    <property type="match status" value="1"/>
</dbReference>
<dbReference type="InterPro" id="IPR000308">
    <property type="entry name" value="14-3-3"/>
</dbReference>
<dbReference type="InterPro" id="IPR023409">
    <property type="entry name" value="14-3-3_CS"/>
</dbReference>
<dbReference type="InterPro" id="IPR036815">
    <property type="entry name" value="14-3-3_dom_sf"/>
</dbReference>
<dbReference type="InterPro" id="IPR023410">
    <property type="entry name" value="14-3-3_domain"/>
</dbReference>
<dbReference type="PANTHER" id="PTHR18860">
    <property type="entry name" value="14-3-3 PROTEIN"/>
    <property type="match status" value="1"/>
</dbReference>
<dbReference type="Pfam" id="PF00244">
    <property type="entry name" value="14-3-3"/>
    <property type="match status" value="1"/>
</dbReference>
<dbReference type="PIRSF" id="PIRSF000868">
    <property type="entry name" value="14-3-3"/>
    <property type="match status" value="1"/>
</dbReference>
<dbReference type="PRINTS" id="PR00305">
    <property type="entry name" value="1433ZETA"/>
</dbReference>
<dbReference type="SMART" id="SM00101">
    <property type="entry name" value="14_3_3"/>
    <property type="match status" value="1"/>
</dbReference>
<dbReference type="SUPFAM" id="SSF48445">
    <property type="entry name" value="14-3-3 protein"/>
    <property type="match status" value="1"/>
</dbReference>
<dbReference type="PROSITE" id="PS00796">
    <property type="entry name" value="1433_1"/>
    <property type="match status" value="1"/>
</dbReference>
<dbReference type="PROSITE" id="PS00797">
    <property type="entry name" value="1433_2"/>
    <property type="match status" value="1"/>
</dbReference>
<accession>P29311</accession>
<accession>D3DM86</accession>
<accession>Q06854</accession>
<reference key="1">
    <citation type="journal article" date="1992" name="FEBS Lett.">
        <title>Characterization of the yeast BMH1 gene encoding a putative protein homologous to mammalian protein kinase II activators and protein kinase C inhibitors.</title>
        <authorList>
            <person name="van Heusden G.P."/>
            <person name="Wenzel T.J."/>
            <person name="Lagendijk E.L."/>
            <person name="de Steensma H.Y."/>
            <person name="van den Berg J.A."/>
        </authorList>
    </citation>
    <scope>NUCLEOTIDE SEQUENCE [GENOMIC DNA]</scope>
    <source>
        <strain>ATCC 26109 / X2180</strain>
    </source>
</reference>
<reference key="2">
    <citation type="submission" date="1993-02" db="EMBL/GenBank/DDBJ databases">
        <authorList>
            <person name="Mulligan J.T."/>
            <person name="Dietrich F.S."/>
            <person name="Hennessey K.M."/>
            <person name="Sehl P."/>
            <person name="Komp C."/>
            <person name="Wei Y."/>
            <person name="Taylor P."/>
            <person name="Nakahara K."/>
            <person name="Roberts D."/>
            <person name="Davis R.W."/>
        </authorList>
    </citation>
    <scope>NUCLEOTIDE SEQUENCE [GENOMIC DNA]</scope>
</reference>
<reference key="3">
    <citation type="journal article" date="1997" name="Nature">
        <title>The nucleotide sequence of Saccharomyces cerevisiae chromosome V.</title>
        <authorList>
            <person name="Dietrich F.S."/>
            <person name="Mulligan J.T."/>
            <person name="Hennessy K.M."/>
            <person name="Yelton M.A."/>
            <person name="Allen E."/>
            <person name="Araujo R."/>
            <person name="Aviles E."/>
            <person name="Berno A."/>
            <person name="Brennan T."/>
            <person name="Carpenter J."/>
            <person name="Chen E."/>
            <person name="Cherry J.M."/>
            <person name="Chung E."/>
            <person name="Duncan M."/>
            <person name="Guzman E."/>
            <person name="Hartzell G."/>
            <person name="Hunicke-Smith S."/>
            <person name="Hyman R.W."/>
            <person name="Kayser A."/>
            <person name="Komp C."/>
            <person name="Lashkari D."/>
            <person name="Lew H."/>
            <person name="Lin D."/>
            <person name="Mosedale D."/>
            <person name="Nakahara K."/>
            <person name="Namath A."/>
            <person name="Norgren R."/>
            <person name="Oefner P."/>
            <person name="Oh C."/>
            <person name="Petel F.X."/>
            <person name="Roberts D."/>
            <person name="Sehl P."/>
            <person name="Schramm S."/>
            <person name="Shogren T."/>
            <person name="Smith V."/>
            <person name="Taylor P."/>
            <person name="Wei Y."/>
            <person name="Botstein D."/>
            <person name="Davis R.W."/>
        </authorList>
    </citation>
    <scope>NUCLEOTIDE SEQUENCE [LARGE SCALE GENOMIC DNA]</scope>
    <source>
        <strain>ATCC 204508 / S288c</strain>
    </source>
</reference>
<reference key="4">
    <citation type="journal article" date="2014" name="G3 (Bethesda)">
        <title>The reference genome sequence of Saccharomyces cerevisiae: Then and now.</title>
        <authorList>
            <person name="Engel S.R."/>
            <person name="Dietrich F.S."/>
            <person name="Fisk D.G."/>
            <person name="Binkley G."/>
            <person name="Balakrishnan R."/>
            <person name="Costanzo M.C."/>
            <person name="Dwight S.S."/>
            <person name="Hitz B.C."/>
            <person name="Karra K."/>
            <person name="Nash R.S."/>
            <person name="Weng S."/>
            <person name="Wong E.D."/>
            <person name="Lloyd P."/>
            <person name="Skrzypek M.S."/>
            <person name="Miyasato S.R."/>
            <person name="Simison M."/>
            <person name="Cherry J.M."/>
        </authorList>
    </citation>
    <scope>GENOME REANNOTATION</scope>
    <source>
        <strain>ATCC 204508 / S288c</strain>
    </source>
</reference>
<reference key="5">
    <citation type="journal article" date="1997" name="Electrophoresis">
        <title>Proteome studies of Saccharomyces cerevisiae: identification and characterization of abundant proteins.</title>
        <authorList>
            <person name="Garrels J.I."/>
            <person name="McLaughlin C.S."/>
            <person name="Warner J.R."/>
            <person name="Futcher B."/>
            <person name="Latter G.I."/>
            <person name="Kobayashi R."/>
            <person name="Schwender B."/>
            <person name="Volpe T."/>
            <person name="Anderson D.S."/>
            <person name="Mesquita-Fuentes R."/>
            <person name="Payne W.E."/>
        </authorList>
    </citation>
    <scope>ACETYLATION AT SER-2</scope>
</reference>
<reference key="6">
    <citation type="journal article" date="2003" name="J. Biol. Chem.">
        <title>Self-association of the spindle pole body-related intermediate filament protein Fin1p and its phosphorylation-dependent interaction with 14-3-3 proteins in yeast.</title>
        <authorList>
            <person name="van Hemert M.J."/>
            <person name="Deelder A.M."/>
            <person name="Molenaar C."/>
            <person name="Steensma H.Y."/>
            <person name="van Heusden G.P.H."/>
        </authorList>
    </citation>
    <scope>INTERACTION WITH FIN1</scope>
</reference>
<reference key="7">
    <citation type="journal article" date="2003" name="Nature">
        <title>Global analysis of protein expression in yeast.</title>
        <authorList>
            <person name="Ghaemmaghami S."/>
            <person name="Huh W.-K."/>
            <person name="Bower K."/>
            <person name="Howson R.W."/>
            <person name="Belle A."/>
            <person name="Dephoure N."/>
            <person name="O'Shea E.K."/>
            <person name="Weissman J.S."/>
        </authorList>
    </citation>
    <scope>LEVEL OF PROTEIN EXPRESSION [LARGE SCALE ANALYSIS]</scope>
</reference>
<reference key="8">
    <citation type="journal article" date="2007" name="Proc. Natl. Acad. Sci. U.S.A.">
        <title>Analysis of phosphorylation sites on proteins from Saccharomyces cerevisiae by electron transfer dissociation (ETD) mass spectrometry.</title>
        <authorList>
            <person name="Chi A."/>
            <person name="Huttenhower C."/>
            <person name="Geer L.Y."/>
            <person name="Coon J.J."/>
            <person name="Syka J.E.P."/>
            <person name="Bai D.L."/>
            <person name="Shabanowitz J."/>
            <person name="Burke D.J."/>
            <person name="Troyanskaya O.G."/>
            <person name="Hunt D.F."/>
        </authorList>
    </citation>
    <scope>PHOSPHORYLATION [LARGE SCALE ANALYSIS] AT SER-89</scope>
    <scope>IDENTIFICATION BY MASS SPECTROMETRY [LARGE SCALE ANALYSIS]</scope>
</reference>
<reference key="9">
    <citation type="journal article" date="2009" name="Science">
        <title>Global analysis of Cdk1 substrate phosphorylation sites provides insights into evolution.</title>
        <authorList>
            <person name="Holt L.J."/>
            <person name="Tuch B.B."/>
            <person name="Villen J."/>
            <person name="Johnson A.D."/>
            <person name="Gygi S.P."/>
            <person name="Morgan D.O."/>
        </authorList>
    </citation>
    <scope>IDENTIFICATION BY MASS SPECTROMETRY [LARGE SCALE ANALYSIS]</scope>
</reference>
<reference key="10">
    <citation type="journal article" date="2012" name="Biochem. J.">
        <title>Role of individual phosphorylation sites for the 14-3-3-protein-dependent activation of yeast neutral trehalase Nth1.</title>
        <authorList>
            <person name="Veisova D."/>
            <person name="Macakova E."/>
            <person name="Rezabkova L."/>
            <person name="Sulc M."/>
            <person name="Vacha P."/>
            <person name="Sychrova H."/>
            <person name="Obsil T."/>
            <person name="Obsilova V."/>
        </authorList>
    </citation>
    <scope>SUBUNIT</scope>
    <scope>INTERACTION WITH NTH1</scope>
</reference>
<reference key="11">
    <citation type="journal article" date="2012" name="Proteomics">
        <title>Sites of ubiquitin attachment in Saccharomyces cerevisiae.</title>
        <authorList>
            <person name="Starita L.M."/>
            <person name="Lo R.S."/>
            <person name="Eng J.K."/>
            <person name="von Haller P.D."/>
            <person name="Fields S."/>
        </authorList>
    </citation>
    <scope>UBIQUITINATION [LARGE SCALE ANALYSIS] AT LYS-76</scope>
    <scope>IDENTIFICATION BY MASS SPECTROMETRY [LARGE SCALE ANALYSIS]</scope>
</reference>
<reference evidence="8" key="12">
    <citation type="journal article" date="2017" name="Proc. Natl. Acad. Sci. U.S.A.">
        <title>Molecular basis of the 14-3-3 protein-dependent activation of yeast neutral trehalase Nth1.</title>
        <authorList>
            <person name="Alblova M."/>
            <person name="Smidova A."/>
            <person name="Docekal V."/>
            <person name="Vesely J."/>
            <person name="Herman P."/>
            <person name="Obsilova V."/>
            <person name="Obsil T."/>
        </authorList>
    </citation>
    <scope>X-RAY CRYSTALLOGRAPHY (2.29 ANGSTROMS) OF 1-236 IN COMPLEX WITH NTH1</scope>
    <scope>SUBUNIT</scope>
    <scope>INTERACTION WITH NTH1</scope>
</reference>